<keyword id="KW-0150">Chloroplast</keyword>
<keyword id="KW-0456">Lyase</keyword>
<keyword id="KW-0460">Magnesium</keyword>
<keyword id="KW-0479">Metal-binding</keyword>
<keyword id="KW-0934">Plastid</keyword>
<keyword id="KW-0809">Transit peptide</keyword>
<organism>
    <name type="scientific">Picea engelmannii x Picea glauca</name>
    <name type="common">Hybrid white spruce</name>
    <dbReference type="NCBI Taxonomy" id="373101"/>
    <lineage>
        <taxon>Eukaryota</taxon>
        <taxon>Viridiplantae</taxon>
        <taxon>Streptophyta</taxon>
        <taxon>Embryophyta</taxon>
        <taxon>Tracheophyta</taxon>
        <taxon>Spermatophyta</taxon>
        <taxon>Pinopsida</taxon>
        <taxon>Pinidae</taxon>
        <taxon>Conifers I</taxon>
        <taxon>Pinales</taxon>
        <taxon>Pinaceae</taxon>
        <taxon>Picea</taxon>
    </lineage>
</organism>
<feature type="transit peptide" description="Chloroplast" evidence="3">
    <location>
        <begin position="1"/>
        <end position="52"/>
    </location>
</feature>
<feature type="chain" id="PRO_0000454403" description="1,8-cineole synthase, chloroplastic">
    <location>
        <begin position="53"/>
        <end position="612"/>
    </location>
</feature>
<feature type="short sequence motif" description="DDXXD motif" evidence="1">
    <location>
        <begin position="363"/>
        <end position="367"/>
    </location>
</feature>
<feature type="binding site" evidence="2">
    <location>
        <position position="363"/>
    </location>
    <ligand>
        <name>Mg(2+)</name>
        <dbReference type="ChEBI" id="CHEBI:18420"/>
        <label>1</label>
    </ligand>
</feature>
<feature type="binding site" evidence="2">
    <location>
        <position position="363"/>
    </location>
    <ligand>
        <name>Mg(2+)</name>
        <dbReference type="ChEBI" id="CHEBI:18420"/>
        <label>2</label>
    </ligand>
</feature>
<feature type="binding site" evidence="2">
    <location>
        <position position="367"/>
    </location>
    <ligand>
        <name>Mg(2+)</name>
        <dbReference type="ChEBI" id="CHEBI:18420"/>
        <label>1</label>
    </ligand>
</feature>
<feature type="binding site" evidence="2">
    <location>
        <position position="367"/>
    </location>
    <ligand>
        <name>Mg(2+)</name>
        <dbReference type="ChEBI" id="CHEBI:18420"/>
        <label>2</label>
    </ligand>
</feature>
<feature type="binding site" evidence="2">
    <location>
        <position position="515"/>
    </location>
    <ligand>
        <name>Mg(2+)</name>
        <dbReference type="ChEBI" id="CHEBI:18420"/>
        <label>3</label>
    </ligand>
</feature>
<sequence>MALVSGAPLASRSCLNKSLISSTHELKPLRRTILPTLRWKSATPSINMCLTTSNSVDAVQRRIANHHSNLWDDDFIQSLSTPYEAPSYRERAERLIGEVKEMFESMGPNNDLLQRLSMVESVERLGIDRHFKNEIKSALDYVYSHWNEKGIGCGRDSVVSDLNSTALALRTLRLHGYPVSSDVLEHFKDQKGRFACSSIKTEGEIRSLLNLFRASLVAFPNEKVMEEAEIFSTTYLKEAVQKIPVSSLSRQIEYNMEYGWHTNLPRLEARNYMGDMIHEMSYMNAEKLLELAKLEFNIFHSLQERELKHLSRWWKDSGFSQLNFVRHRHVEYYTLASCIDIDPKHSAFRLGFAKMCHLITVLDDIYDTFGTMDELKLFTAAIKRWDPSATEWLPEYMKGVYMVVYETVNEMAGEAKKSQGRDTINYARQAWEAYIDSYMKEAEWISSGCLPTFEEYYENGKVSFGYQISVLQPILTLDVPLPHHILQEIIFPSRFNGLASGILRLKGDTRCYQADRARGEEASCISCYMNDNPGATEEDALNHIHAMVNELMKEFNWELLKPDNNVPVSSKKHAFDITRAVHHGYKYRDGYSVANNEIKNLVITTVLEPVPL</sequence>
<name>CINES_PICXS</name>
<evidence type="ECO:0000250" key="1">
    <source>
        <dbReference type="UniProtKB" id="A0A1C9J6A7"/>
    </source>
</evidence>
<evidence type="ECO:0000250" key="2">
    <source>
        <dbReference type="UniProtKB" id="Q40577"/>
    </source>
</evidence>
<evidence type="ECO:0000255" key="3"/>
<evidence type="ECO:0000269" key="4">
    <source>
    </source>
</evidence>
<evidence type="ECO:0000303" key="5">
    <source>
    </source>
</evidence>
<evidence type="ECO:0000305" key="6"/>
<protein>
    <recommendedName>
        <fullName evidence="5">1,8-cineole synthase, chloroplastic</fullName>
        <ecNumber evidence="4">4.2.3.108</ecNumber>
    </recommendedName>
    <alternativeName>
        <fullName evidence="5">Terpene synthase TPS-Cin</fullName>
        <shortName evidence="5">PgxeTPS-Cin</shortName>
    </alternativeName>
</protein>
<proteinExistence type="evidence at protein level"/>
<dbReference type="EC" id="4.2.3.108" evidence="4"/>
<dbReference type="EMBL" id="HQ426156">
    <property type="protein sequence ID" value="ADZ45497.1"/>
    <property type="molecule type" value="mRNA"/>
</dbReference>
<dbReference type="SMR" id="F2XF98"/>
<dbReference type="UniPathway" id="UPA00924"/>
<dbReference type="GO" id="GO:0009507">
    <property type="term" value="C:chloroplast"/>
    <property type="evidence" value="ECO:0007669"/>
    <property type="project" value="UniProtKB-SubCell"/>
</dbReference>
<dbReference type="GO" id="GO:0102313">
    <property type="term" value="F:1,8-cineole synthase activity"/>
    <property type="evidence" value="ECO:0000314"/>
    <property type="project" value="UniProtKB"/>
</dbReference>
<dbReference type="GO" id="GO:0016829">
    <property type="term" value="F:lyase activity"/>
    <property type="evidence" value="ECO:0000314"/>
    <property type="project" value="UniProtKB"/>
</dbReference>
<dbReference type="GO" id="GO:0000287">
    <property type="term" value="F:magnesium ion binding"/>
    <property type="evidence" value="ECO:0007669"/>
    <property type="project" value="InterPro"/>
</dbReference>
<dbReference type="GO" id="GO:0010333">
    <property type="term" value="F:terpene synthase activity"/>
    <property type="evidence" value="ECO:0007669"/>
    <property type="project" value="InterPro"/>
</dbReference>
<dbReference type="GO" id="GO:0016102">
    <property type="term" value="P:diterpenoid biosynthetic process"/>
    <property type="evidence" value="ECO:0007669"/>
    <property type="project" value="InterPro"/>
</dbReference>
<dbReference type="GO" id="GO:0010597">
    <property type="term" value="P:green leaf volatile biosynthetic process"/>
    <property type="evidence" value="ECO:0000314"/>
    <property type="project" value="UniProtKB"/>
</dbReference>
<dbReference type="GO" id="GO:0016099">
    <property type="term" value="P:monoterpenoid biosynthetic process"/>
    <property type="evidence" value="ECO:0000314"/>
    <property type="project" value="UniProtKB"/>
</dbReference>
<dbReference type="CDD" id="cd00684">
    <property type="entry name" value="Terpene_cyclase_plant_C1"/>
    <property type="match status" value="1"/>
</dbReference>
<dbReference type="FunFam" id="1.50.10.130:FF:000002">
    <property type="entry name" value="Ent-copalyl diphosphate synthase, chloroplastic"/>
    <property type="match status" value="1"/>
</dbReference>
<dbReference type="FunFam" id="1.10.600.10:FF:000005">
    <property type="entry name" value="Ent-kaur-16-ene synthase, chloroplastic"/>
    <property type="match status" value="1"/>
</dbReference>
<dbReference type="Gene3D" id="1.10.600.10">
    <property type="entry name" value="Farnesyl Diphosphate Synthase"/>
    <property type="match status" value="1"/>
</dbReference>
<dbReference type="Gene3D" id="1.50.10.130">
    <property type="entry name" value="Terpene synthase, N-terminal domain"/>
    <property type="match status" value="1"/>
</dbReference>
<dbReference type="InterPro" id="IPR008949">
    <property type="entry name" value="Isoprenoid_synthase_dom_sf"/>
</dbReference>
<dbReference type="InterPro" id="IPR034741">
    <property type="entry name" value="Terpene_cyclase-like_1_C"/>
</dbReference>
<dbReference type="InterPro" id="IPR044814">
    <property type="entry name" value="Terpene_cyclase_plant_C1"/>
</dbReference>
<dbReference type="InterPro" id="IPR001906">
    <property type="entry name" value="Terpene_synth_N"/>
</dbReference>
<dbReference type="InterPro" id="IPR036965">
    <property type="entry name" value="Terpene_synth_N_sf"/>
</dbReference>
<dbReference type="InterPro" id="IPR050148">
    <property type="entry name" value="Terpene_synthase-like"/>
</dbReference>
<dbReference type="InterPro" id="IPR005630">
    <property type="entry name" value="Terpene_synthase_metal-bd"/>
</dbReference>
<dbReference type="InterPro" id="IPR008930">
    <property type="entry name" value="Terpenoid_cyclase/PrenylTrfase"/>
</dbReference>
<dbReference type="PANTHER" id="PTHR31225">
    <property type="entry name" value="OS04G0344100 PROTEIN-RELATED"/>
    <property type="match status" value="1"/>
</dbReference>
<dbReference type="Pfam" id="PF01397">
    <property type="entry name" value="Terpene_synth"/>
    <property type="match status" value="1"/>
</dbReference>
<dbReference type="Pfam" id="PF03936">
    <property type="entry name" value="Terpene_synth_C"/>
    <property type="match status" value="1"/>
</dbReference>
<dbReference type="SFLD" id="SFLDS00005">
    <property type="entry name" value="Isoprenoid_Synthase_Type_I"/>
    <property type="match status" value="1"/>
</dbReference>
<dbReference type="SFLD" id="SFLDG01019">
    <property type="entry name" value="Terpene_Cyclase_Like_1_C_Termi"/>
    <property type="match status" value="1"/>
</dbReference>
<dbReference type="SFLD" id="SFLDG01014">
    <property type="entry name" value="Terpene_Cyclase_Like_1_N-term"/>
    <property type="match status" value="1"/>
</dbReference>
<dbReference type="SUPFAM" id="SSF48239">
    <property type="entry name" value="Terpenoid cyclases/Protein prenyltransferases"/>
    <property type="match status" value="1"/>
</dbReference>
<dbReference type="SUPFAM" id="SSF48576">
    <property type="entry name" value="Terpenoid synthases"/>
    <property type="match status" value="1"/>
</dbReference>
<accession>F2XF98</accession>
<comment type="function">
    <text evidence="4">Terpene synthase (TPS) involved in the biosynthesis of monoterpene natural products included in conifer oleoresin secretions and volatile emissions; these compounds contribute to biotic and abiotic stress defense against herbivores and pathogens (PubMed:21385377). Catalyzes the conversion of (2E)-geranyl diphosphate (GPP) to 1,8-cineole (PubMed:21385377).</text>
</comment>
<comment type="catalytic activity">
    <reaction evidence="4">
        <text>(2E)-geranyl diphosphate + H2O = 1,8-cineole + diphosphate</text>
        <dbReference type="Rhea" id="RHEA:32543"/>
        <dbReference type="ChEBI" id="CHEBI:15377"/>
        <dbReference type="ChEBI" id="CHEBI:27961"/>
        <dbReference type="ChEBI" id="CHEBI:33019"/>
        <dbReference type="ChEBI" id="CHEBI:58057"/>
        <dbReference type="EC" id="4.2.3.108"/>
    </reaction>
</comment>
<comment type="cofactor">
    <cofactor evidence="1">
        <name>Mg(2+)</name>
        <dbReference type="ChEBI" id="CHEBI:18420"/>
    </cofactor>
    <cofactor evidence="1">
        <name>Mn(2+)</name>
        <dbReference type="ChEBI" id="CHEBI:29035"/>
    </cofactor>
    <text evidence="1">Binds 3 Mg(2+) or Mn(2+) ions per subunit.</text>
</comment>
<comment type="pathway">
    <text evidence="4">Terpene metabolism; oleoresin biosynthesis.</text>
</comment>
<comment type="subcellular location">
    <subcellularLocation>
        <location evidence="3">Plastid</location>
        <location evidence="3">Chloroplast</location>
    </subcellularLocation>
</comment>
<comment type="domain">
    <text evidence="1">The Asp-Asp-Xaa-Xaa-Asp/Glu (DDXXD/E) motif is important for the catalytic activity, presumably through binding to Mg(2+).</text>
</comment>
<comment type="similarity">
    <text evidence="6">Belongs to the terpene synthase family. Tpsd subfamily.</text>
</comment>
<gene>
    <name evidence="5" type="primary">TPS-Cin</name>
</gene>
<reference key="1">
    <citation type="journal article" date="2011" name="BMC Plant Biol.">
        <title>Transcriptome mining, functional characterization, and phylogeny of a large terpene synthase gene family in spruce (Picea spp.).</title>
        <authorList>
            <person name="Keeling C.I."/>
            <person name="Weisshaar S."/>
            <person name="Ralph S.G."/>
            <person name="Jancsik S."/>
            <person name="Hamberger B."/>
            <person name="Dullat H.K."/>
            <person name="Bohlmann J."/>
        </authorList>
    </citation>
    <scope>NUCLEOTIDE SEQUENCE [MRNA]</scope>
    <scope>CATALYTIC ACTIVITY</scope>
    <scope>FUNCTION</scope>
    <scope>PATHWAY</scope>
    <scope>GENE FAMILY</scope>
    <source>
        <strain>cv. Fa1-1028</strain>
    </source>
</reference>